<gene>
    <name type="primary">KEX1</name>
    <name type="ordered locus">DEHA2F22352g</name>
</gene>
<comment type="function">
    <text evidence="1">Protease with a carboxypeptidase B-like function involved in the C-terminal processing of the lysine and arginine residues from protein precursors. Promotes cell fusion and is involved in the programmed cell death (By similarity).</text>
</comment>
<comment type="catalytic activity">
    <reaction>
        <text>Preferential release of a C-terminal arginine or lysine residue.</text>
        <dbReference type="EC" id="3.4.16.6"/>
    </reaction>
</comment>
<comment type="subcellular location">
    <subcellularLocation>
        <location evidence="1">Golgi apparatus</location>
        <location evidence="1">trans-Golgi network membrane</location>
        <topology evidence="1">Single-pass type I membrane protein</topology>
    </subcellularLocation>
</comment>
<comment type="similarity">
    <text evidence="5">Belongs to the peptidase S10 family.</text>
</comment>
<protein>
    <recommendedName>
        <fullName>Pheromone-processing carboxypeptidase KEX1</fullName>
        <ecNumber>3.4.16.6</ecNumber>
    </recommendedName>
    <alternativeName>
        <fullName>Carboxypeptidase D</fullName>
    </alternativeName>
</protein>
<organism>
    <name type="scientific">Debaryomyces hansenii (strain ATCC 36239 / CBS 767 / BCRC 21394 / JCM 1990 / NBRC 0083 / IGC 2968)</name>
    <name type="common">Yeast</name>
    <name type="synonym">Torulaspora hansenii</name>
    <dbReference type="NCBI Taxonomy" id="284592"/>
    <lineage>
        <taxon>Eukaryota</taxon>
        <taxon>Fungi</taxon>
        <taxon>Dikarya</taxon>
        <taxon>Ascomycota</taxon>
        <taxon>Saccharomycotina</taxon>
        <taxon>Pichiomycetes</taxon>
        <taxon>Debaryomycetaceae</taxon>
        <taxon>Debaryomyces</taxon>
    </lineage>
</organism>
<name>KEX1_DEBHA</name>
<sequence>MVIKYLLLILVQSFVAFALPFTSRSDPKAEYLVTSLPGLYSNIRTDERPLMFAGQLELYPENQTHYFFWKYQDTNQIPEAKKRTIFWLNGGPGCSSMDGALMEAGPFRINKEGEVIYNEGSWHKSGDMVFVDQPAGTGFSYSDDYDHDLDQITVEFVRFMEKFFELFPEDASNEIYFAGESYAGQYIPYIADGILRRNKNLREGEKPFNLKGLMIGNGWIAPNEQSLSYLPYSVQAGIIKTNNPRWSSILRQHQECQDIVSENDGPDGSDVSQVVSNTCERVLNLILEATRDQSAADNEQCVNMYDHTLRDSYPSCGMNWPPDLANVTPFLREQSVMNDLNLINHKKWSECSGKVGNSFRAKNSKPAIHLFPSILEEIPIMLFNGNRDIICNYIGIEGFIKKLTWNGQTGFSEDLDTLDWVYDNKTAGYIQSERNLTVVNVFDASHMVPFDKPEISRSLIDIITGNFDEKEVDNKSDMKKKSIVTYPLGVRMAKQKEESESKTSPTSVTQSKTSSISAVSGKSLATSTTLDQEHSATPSAEAERAKNQQTSNRITRLIQLLVIVVLIWGVYILYSSYRSRPSSIIKTGPSGKKKNVQWADQLRQFEEEEIEQNEQGILSRALNKLKGGDSRGTYAPTSGKTYEDIEMNEGITEHTDNRVDDFIIESDEEDAHDENQTNKQSVSK</sequence>
<reference key="1">
    <citation type="journal article" date="2004" name="Nature">
        <title>Genome evolution in yeasts.</title>
        <authorList>
            <person name="Dujon B."/>
            <person name="Sherman D."/>
            <person name="Fischer G."/>
            <person name="Durrens P."/>
            <person name="Casaregola S."/>
            <person name="Lafontaine I."/>
            <person name="de Montigny J."/>
            <person name="Marck C."/>
            <person name="Neuveglise C."/>
            <person name="Talla E."/>
            <person name="Goffard N."/>
            <person name="Frangeul L."/>
            <person name="Aigle M."/>
            <person name="Anthouard V."/>
            <person name="Babour A."/>
            <person name="Barbe V."/>
            <person name="Barnay S."/>
            <person name="Blanchin S."/>
            <person name="Beckerich J.-M."/>
            <person name="Beyne E."/>
            <person name="Bleykasten C."/>
            <person name="Boisrame A."/>
            <person name="Boyer J."/>
            <person name="Cattolico L."/>
            <person name="Confanioleri F."/>
            <person name="de Daruvar A."/>
            <person name="Despons L."/>
            <person name="Fabre E."/>
            <person name="Fairhead C."/>
            <person name="Ferry-Dumazet H."/>
            <person name="Groppi A."/>
            <person name="Hantraye F."/>
            <person name="Hennequin C."/>
            <person name="Jauniaux N."/>
            <person name="Joyet P."/>
            <person name="Kachouri R."/>
            <person name="Kerrest A."/>
            <person name="Koszul R."/>
            <person name="Lemaire M."/>
            <person name="Lesur I."/>
            <person name="Ma L."/>
            <person name="Muller H."/>
            <person name="Nicaud J.-M."/>
            <person name="Nikolski M."/>
            <person name="Oztas S."/>
            <person name="Ozier-Kalogeropoulos O."/>
            <person name="Pellenz S."/>
            <person name="Potier S."/>
            <person name="Richard G.-F."/>
            <person name="Straub M.-L."/>
            <person name="Suleau A."/>
            <person name="Swennen D."/>
            <person name="Tekaia F."/>
            <person name="Wesolowski-Louvel M."/>
            <person name="Westhof E."/>
            <person name="Wirth B."/>
            <person name="Zeniou-Meyer M."/>
            <person name="Zivanovic Y."/>
            <person name="Bolotin-Fukuhara M."/>
            <person name="Thierry A."/>
            <person name="Bouchier C."/>
            <person name="Caudron B."/>
            <person name="Scarpelli C."/>
            <person name="Gaillardin C."/>
            <person name="Weissenbach J."/>
            <person name="Wincker P."/>
            <person name="Souciet J.-L."/>
        </authorList>
    </citation>
    <scope>NUCLEOTIDE SEQUENCE [LARGE SCALE GENOMIC DNA]</scope>
    <source>
        <strain>ATCC 36239 / CBS 767 / BCRC 21394 / JCM 1990 / NBRC 0083 / IGC 2968</strain>
    </source>
</reference>
<feature type="signal peptide" evidence="2">
    <location>
        <begin position="1"/>
        <end position="18"/>
    </location>
</feature>
<feature type="chain" id="PRO_0000411919" description="Pheromone-processing carboxypeptidase KEX1">
    <location>
        <begin position="19"/>
        <end position="684"/>
    </location>
</feature>
<feature type="topological domain" description="Lumenal" evidence="2">
    <location>
        <begin position="19"/>
        <end position="556"/>
    </location>
</feature>
<feature type="transmembrane region" description="Helical" evidence="2">
    <location>
        <begin position="557"/>
        <end position="577"/>
    </location>
</feature>
<feature type="topological domain" description="Cytoplasmic" evidence="2">
    <location>
        <begin position="578"/>
        <end position="684"/>
    </location>
</feature>
<feature type="region of interest" description="Disordered" evidence="4">
    <location>
        <begin position="494"/>
        <end position="549"/>
    </location>
</feature>
<feature type="region of interest" description="Disordered" evidence="4">
    <location>
        <begin position="647"/>
        <end position="684"/>
    </location>
</feature>
<feature type="compositionally biased region" description="Polar residues" evidence="4">
    <location>
        <begin position="510"/>
        <end position="538"/>
    </location>
</feature>
<feature type="compositionally biased region" description="Basic and acidic residues" evidence="4">
    <location>
        <begin position="651"/>
        <end position="661"/>
    </location>
</feature>
<feature type="compositionally biased region" description="Acidic residues" evidence="4">
    <location>
        <begin position="662"/>
        <end position="672"/>
    </location>
</feature>
<feature type="active site" evidence="3">
    <location>
        <position position="181"/>
    </location>
</feature>
<feature type="active site" evidence="3">
    <location>
        <position position="388"/>
    </location>
</feature>
<feature type="active site" evidence="3">
    <location>
        <position position="446"/>
    </location>
</feature>
<feature type="glycosylation site" description="N-linked (GlcNAc...) asparagine" evidence="2">
    <location>
        <position position="62"/>
    </location>
</feature>
<feature type="glycosylation site" description="N-linked (GlcNAc...) asparagine" evidence="2">
    <location>
        <position position="424"/>
    </location>
</feature>
<feature type="glycosylation site" description="N-linked (GlcNAc...) asparagine" evidence="2">
    <location>
        <position position="435"/>
    </location>
</feature>
<feature type="glycosylation site" description="N-linked (GlcNAc...) asparagine" evidence="2">
    <location>
        <position position="474"/>
    </location>
</feature>
<accession>B5RUL7</accession>
<keyword id="KW-0053">Apoptosis</keyword>
<keyword id="KW-0121">Carboxypeptidase</keyword>
<keyword id="KW-0325">Glycoprotein</keyword>
<keyword id="KW-0333">Golgi apparatus</keyword>
<keyword id="KW-0378">Hydrolase</keyword>
<keyword id="KW-0472">Membrane</keyword>
<keyword id="KW-0645">Protease</keyword>
<keyword id="KW-1185">Reference proteome</keyword>
<keyword id="KW-0732">Signal</keyword>
<keyword id="KW-0812">Transmembrane</keyword>
<keyword id="KW-1133">Transmembrane helix</keyword>
<dbReference type="EC" id="3.4.16.6"/>
<dbReference type="EMBL" id="CR382138">
    <property type="protein sequence ID" value="CAR66395.1"/>
    <property type="molecule type" value="Genomic_DNA"/>
</dbReference>
<dbReference type="RefSeq" id="XP_002770877.1">
    <property type="nucleotide sequence ID" value="XM_002770831.1"/>
</dbReference>
<dbReference type="SMR" id="B5RUL7"/>
<dbReference type="FunCoup" id="B5RUL7">
    <property type="interactions" value="127"/>
</dbReference>
<dbReference type="STRING" id="284592.B5RUL7"/>
<dbReference type="ESTHER" id="debha-kex1">
    <property type="family name" value="Carboxypeptidase_S10"/>
</dbReference>
<dbReference type="MEROPS" id="S10.007"/>
<dbReference type="GlyCosmos" id="B5RUL7">
    <property type="glycosylation" value="4 sites, No reported glycans"/>
</dbReference>
<dbReference type="GeneID" id="8999041"/>
<dbReference type="KEGG" id="dha:DEHA2F22352g"/>
<dbReference type="VEuPathDB" id="FungiDB:DEHA2F22352g"/>
<dbReference type="eggNOG" id="KOG1282">
    <property type="taxonomic scope" value="Eukaryota"/>
</dbReference>
<dbReference type="HOGENOM" id="CLU_008523_11_2_1"/>
<dbReference type="InParanoid" id="B5RUL7"/>
<dbReference type="OMA" id="PLMFAGQ"/>
<dbReference type="OrthoDB" id="443318at2759"/>
<dbReference type="Proteomes" id="UP000000599">
    <property type="component" value="Chromosome F"/>
</dbReference>
<dbReference type="GO" id="GO:0016020">
    <property type="term" value="C:membrane"/>
    <property type="evidence" value="ECO:0007669"/>
    <property type="project" value="UniProtKB-KW"/>
</dbReference>
<dbReference type="GO" id="GO:0005802">
    <property type="term" value="C:trans-Golgi network"/>
    <property type="evidence" value="ECO:0007669"/>
    <property type="project" value="TreeGrafter"/>
</dbReference>
<dbReference type="GO" id="GO:0004185">
    <property type="term" value="F:serine-type carboxypeptidase activity"/>
    <property type="evidence" value="ECO:0007669"/>
    <property type="project" value="UniProtKB-EC"/>
</dbReference>
<dbReference type="GO" id="GO:0006915">
    <property type="term" value="P:apoptotic process"/>
    <property type="evidence" value="ECO:0007669"/>
    <property type="project" value="UniProtKB-KW"/>
</dbReference>
<dbReference type="GO" id="GO:0006508">
    <property type="term" value="P:proteolysis"/>
    <property type="evidence" value="ECO:0007669"/>
    <property type="project" value="UniProtKB-KW"/>
</dbReference>
<dbReference type="Gene3D" id="3.40.50.1820">
    <property type="entry name" value="alpha/beta hydrolase"/>
    <property type="match status" value="1"/>
</dbReference>
<dbReference type="InterPro" id="IPR029058">
    <property type="entry name" value="AB_hydrolase_fold"/>
</dbReference>
<dbReference type="InterPro" id="IPR001563">
    <property type="entry name" value="Peptidase_S10"/>
</dbReference>
<dbReference type="InterPro" id="IPR033124">
    <property type="entry name" value="Ser_caboxypep_his_AS"/>
</dbReference>
<dbReference type="PANTHER" id="PTHR11802:SF190">
    <property type="entry name" value="PHEROMONE-PROCESSING CARBOXYPEPTIDASE KEX1"/>
    <property type="match status" value="1"/>
</dbReference>
<dbReference type="PANTHER" id="PTHR11802">
    <property type="entry name" value="SERINE PROTEASE FAMILY S10 SERINE CARBOXYPEPTIDASE"/>
    <property type="match status" value="1"/>
</dbReference>
<dbReference type="Pfam" id="PF00450">
    <property type="entry name" value="Peptidase_S10"/>
    <property type="match status" value="1"/>
</dbReference>
<dbReference type="PRINTS" id="PR00724">
    <property type="entry name" value="CRBOXYPTASEC"/>
</dbReference>
<dbReference type="SUPFAM" id="SSF53474">
    <property type="entry name" value="alpha/beta-Hydrolases"/>
    <property type="match status" value="1"/>
</dbReference>
<dbReference type="PROSITE" id="PS00560">
    <property type="entry name" value="CARBOXYPEPT_SER_HIS"/>
    <property type="match status" value="1"/>
</dbReference>
<proteinExistence type="inferred from homology"/>
<evidence type="ECO:0000250" key="1"/>
<evidence type="ECO:0000255" key="2"/>
<evidence type="ECO:0000255" key="3">
    <source>
        <dbReference type="PROSITE-ProRule" id="PRU10075"/>
    </source>
</evidence>
<evidence type="ECO:0000256" key="4">
    <source>
        <dbReference type="SAM" id="MobiDB-lite"/>
    </source>
</evidence>
<evidence type="ECO:0000305" key="5"/>